<keyword id="KW-0175">Coiled coil</keyword>
<keyword id="KW-1185">Reference proteome</keyword>
<keyword id="KW-0770">Synapse</keyword>
<organism>
    <name type="scientific">Danio rerio</name>
    <name type="common">Zebrafish</name>
    <name type="synonym">Brachydanio rerio</name>
    <dbReference type="NCBI Taxonomy" id="7955"/>
    <lineage>
        <taxon>Eukaryota</taxon>
        <taxon>Metazoa</taxon>
        <taxon>Chordata</taxon>
        <taxon>Craniata</taxon>
        <taxon>Vertebrata</taxon>
        <taxon>Euteleostomi</taxon>
        <taxon>Actinopterygii</taxon>
        <taxon>Neopterygii</taxon>
        <taxon>Teleostei</taxon>
        <taxon>Ostariophysi</taxon>
        <taxon>Cypriniformes</taxon>
        <taxon>Danionidae</taxon>
        <taxon>Danioninae</taxon>
        <taxon>Danio</taxon>
    </lineage>
</organism>
<sequence>MSQSRAPAREPSETPSQREQIRSHMKMVIQQLEGILKELKDVAHELREVVGQIDKLTSDLELDLDADDWTVATASSTSSSERGLCEAFRLDFLGQDSLSDSWDFCSFLESSSRRSARDDTKPPPTTASVYSQMNGGLPVPNGPLIITPDSSSEEASSSTHSQSQKTSRTAGTRERVRFSDKILYHALCCDDDEDEDEDEDGRDEEEDKLDTDSERSPLAGSPVPPLPELYNCREPPAGGSHTIPRKDALNPGCRKKLLRNSSTQTVSDKSTQTLLPYVPAKHRNKDL</sequence>
<dbReference type="EMBL" id="CR933843">
    <property type="protein sequence ID" value="CAK05068.1"/>
    <property type="molecule type" value="Genomic_DNA"/>
</dbReference>
<dbReference type="EMBL" id="BC127579">
    <property type="protein sequence ID" value="AAI27580.1"/>
    <property type="molecule type" value="mRNA"/>
</dbReference>
<dbReference type="EMBL" id="BC155798">
    <property type="protein sequence ID" value="AAI55799.1"/>
    <property type="molecule type" value="mRNA"/>
</dbReference>
<dbReference type="RefSeq" id="NP_001073418.1">
    <property type="nucleotide sequence ID" value="NM_001079949.2"/>
</dbReference>
<dbReference type="RefSeq" id="XP_005173740.1">
    <property type="nucleotide sequence ID" value="XM_005173683.3"/>
</dbReference>
<dbReference type="RefSeq" id="XP_005173741.1">
    <property type="nucleotide sequence ID" value="XM_005173684.3"/>
</dbReference>
<dbReference type="RefSeq" id="XP_017207376.1">
    <property type="nucleotide sequence ID" value="XM_017351887.1"/>
</dbReference>
<dbReference type="SMR" id="Q1L899"/>
<dbReference type="FunCoup" id="Q1L899">
    <property type="interactions" value="1953"/>
</dbReference>
<dbReference type="STRING" id="7955.ENSDARP00000143115"/>
<dbReference type="PaxDb" id="7955-ENSDARP00000119803"/>
<dbReference type="Ensembl" id="ENSDART00000014582">
    <property type="protein sequence ID" value="ENSDARP00000013334"/>
    <property type="gene ID" value="ENSDARG00000026247"/>
</dbReference>
<dbReference type="Ensembl" id="ENSDART00000140352">
    <property type="protein sequence ID" value="ENSDARP00000143115"/>
    <property type="gene ID" value="ENSDARG00000026247"/>
</dbReference>
<dbReference type="Ensembl" id="ENSDART00000143911">
    <property type="protein sequence ID" value="ENSDARP00000119803"/>
    <property type="gene ID" value="ENSDARG00000026247"/>
</dbReference>
<dbReference type="Ensembl" id="ENSDART00000192120">
    <property type="protein sequence ID" value="ENSDARP00000145120"/>
    <property type="gene ID" value="ENSDARG00000026247"/>
</dbReference>
<dbReference type="GeneID" id="100003007"/>
<dbReference type="KEGG" id="dre:100003007"/>
<dbReference type="AGR" id="ZFIN:ZDB-GENE-030131-8029"/>
<dbReference type="CTD" id="388135"/>
<dbReference type="ZFIN" id="ZDB-GENE-030131-8029">
    <property type="gene designation" value="insyn1"/>
</dbReference>
<dbReference type="eggNOG" id="ENOG502R2SS">
    <property type="taxonomic scope" value="Eukaryota"/>
</dbReference>
<dbReference type="HOGENOM" id="CLU_073752_1_0_1"/>
<dbReference type="InParanoid" id="Q1L899"/>
<dbReference type="OMA" id="HSLLYNC"/>
<dbReference type="OrthoDB" id="9946710at2759"/>
<dbReference type="PhylomeDB" id="Q1L899"/>
<dbReference type="TreeFam" id="TF332382"/>
<dbReference type="PRO" id="PR:Q1L899"/>
<dbReference type="Proteomes" id="UP000000437">
    <property type="component" value="Chromosome 18"/>
</dbReference>
<dbReference type="Bgee" id="ENSDARG00000026247">
    <property type="expression patterns" value="Expressed in brain and 4 other cell types or tissues"/>
</dbReference>
<dbReference type="GO" id="GO:0014069">
    <property type="term" value="C:postsynaptic density"/>
    <property type="evidence" value="ECO:0000250"/>
    <property type="project" value="UniProtKB"/>
</dbReference>
<dbReference type="GO" id="GO:0060080">
    <property type="term" value="P:inhibitory postsynaptic potential"/>
    <property type="evidence" value="ECO:0000318"/>
    <property type="project" value="GO_Central"/>
</dbReference>
<dbReference type="InterPro" id="IPR027997">
    <property type="entry name" value="Largen/INSYN1"/>
</dbReference>
<dbReference type="PANTHER" id="PTHR15917">
    <property type="match status" value="1"/>
</dbReference>
<dbReference type="PANTHER" id="PTHR15917:SF3">
    <property type="entry name" value="INHIBITORY SYNAPTIC FACTOR 1"/>
    <property type="match status" value="1"/>
</dbReference>
<dbReference type="Pfam" id="PF15252">
    <property type="entry name" value="DUF4589"/>
    <property type="match status" value="1"/>
</dbReference>
<gene>
    <name evidence="1" type="primary">insy1</name>
    <name type="ORF">si:dkey-105e17.1</name>
</gene>
<comment type="function">
    <text evidence="2">May be a component of the protein machinery at the inhibitory synapses, probably acting as a scaffold.</text>
</comment>
<comment type="subcellular location">
    <subcellularLocation>
        <location evidence="2">Postsynaptic density</location>
    </subcellularLocation>
</comment>
<comment type="similarity">
    <text evidence="5">Belongs to the INSYN1 family.</text>
</comment>
<accession>Q1L899</accession>
<evidence type="ECO:0000250" key="1">
    <source>
        <dbReference type="UniProtKB" id="Q2T9L4"/>
    </source>
</evidence>
<evidence type="ECO:0000250" key="2">
    <source>
        <dbReference type="UniProtKB" id="Q8CD60"/>
    </source>
</evidence>
<evidence type="ECO:0000255" key="3"/>
<evidence type="ECO:0000256" key="4">
    <source>
        <dbReference type="SAM" id="MobiDB-lite"/>
    </source>
</evidence>
<evidence type="ECO:0000305" key="5"/>
<reference key="1">
    <citation type="journal article" date="2013" name="Nature">
        <title>The zebrafish reference genome sequence and its relationship to the human genome.</title>
        <authorList>
            <person name="Howe K."/>
            <person name="Clark M.D."/>
            <person name="Torroja C.F."/>
            <person name="Torrance J."/>
            <person name="Berthelot C."/>
            <person name="Muffato M."/>
            <person name="Collins J.E."/>
            <person name="Humphray S."/>
            <person name="McLaren K."/>
            <person name="Matthews L."/>
            <person name="McLaren S."/>
            <person name="Sealy I."/>
            <person name="Caccamo M."/>
            <person name="Churcher C."/>
            <person name="Scott C."/>
            <person name="Barrett J.C."/>
            <person name="Koch R."/>
            <person name="Rauch G.J."/>
            <person name="White S."/>
            <person name="Chow W."/>
            <person name="Kilian B."/>
            <person name="Quintais L.T."/>
            <person name="Guerra-Assuncao J.A."/>
            <person name="Zhou Y."/>
            <person name="Gu Y."/>
            <person name="Yen J."/>
            <person name="Vogel J.H."/>
            <person name="Eyre T."/>
            <person name="Redmond S."/>
            <person name="Banerjee R."/>
            <person name="Chi J."/>
            <person name="Fu B."/>
            <person name="Langley E."/>
            <person name="Maguire S.F."/>
            <person name="Laird G.K."/>
            <person name="Lloyd D."/>
            <person name="Kenyon E."/>
            <person name="Donaldson S."/>
            <person name="Sehra H."/>
            <person name="Almeida-King J."/>
            <person name="Loveland J."/>
            <person name="Trevanion S."/>
            <person name="Jones M."/>
            <person name="Quail M."/>
            <person name="Willey D."/>
            <person name="Hunt A."/>
            <person name="Burton J."/>
            <person name="Sims S."/>
            <person name="McLay K."/>
            <person name="Plumb B."/>
            <person name="Davis J."/>
            <person name="Clee C."/>
            <person name="Oliver K."/>
            <person name="Clark R."/>
            <person name="Riddle C."/>
            <person name="Elliot D."/>
            <person name="Threadgold G."/>
            <person name="Harden G."/>
            <person name="Ware D."/>
            <person name="Begum S."/>
            <person name="Mortimore B."/>
            <person name="Kerry G."/>
            <person name="Heath P."/>
            <person name="Phillimore B."/>
            <person name="Tracey A."/>
            <person name="Corby N."/>
            <person name="Dunn M."/>
            <person name="Johnson C."/>
            <person name="Wood J."/>
            <person name="Clark S."/>
            <person name="Pelan S."/>
            <person name="Griffiths G."/>
            <person name="Smith M."/>
            <person name="Glithero R."/>
            <person name="Howden P."/>
            <person name="Barker N."/>
            <person name="Lloyd C."/>
            <person name="Stevens C."/>
            <person name="Harley J."/>
            <person name="Holt K."/>
            <person name="Panagiotidis G."/>
            <person name="Lovell J."/>
            <person name="Beasley H."/>
            <person name="Henderson C."/>
            <person name="Gordon D."/>
            <person name="Auger K."/>
            <person name="Wright D."/>
            <person name="Collins J."/>
            <person name="Raisen C."/>
            <person name="Dyer L."/>
            <person name="Leung K."/>
            <person name="Robertson L."/>
            <person name="Ambridge K."/>
            <person name="Leongamornlert D."/>
            <person name="McGuire S."/>
            <person name="Gilderthorp R."/>
            <person name="Griffiths C."/>
            <person name="Manthravadi D."/>
            <person name="Nichol S."/>
            <person name="Barker G."/>
            <person name="Whitehead S."/>
            <person name="Kay M."/>
            <person name="Brown J."/>
            <person name="Murnane C."/>
            <person name="Gray E."/>
            <person name="Humphries M."/>
            <person name="Sycamore N."/>
            <person name="Barker D."/>
            <person name="Saunders D."/>
            <person name="Wallis J."/>
            <person name="Babbage A."/>
            <person name="Hammond S."/>
            <person name="Mashreghi-Mohammadi M."/>
            <person name="Barr L."/>
            <person name="Martin S."/>
            <person name="Wray P."/>
            <person name="Ellington A."/>
            <person name="Matthews N."/>
            <person name="Ellwood M."/>
            <person name="Woodmansey R."/>
            <person name="Clark G."/>
            <person name="Cooper J."/>
            <person name="Tromans A."/>
            <person name="Grafham D."/>
            <person name="Skuce C."/>
            <person name="Pandian R."/>
            <person name="Andrews R."/>
            <person name="Harrison E."/>
            <person name="Kimberley A."/>
            <person name="Garnett J."/>
            <person name="Fosker N."/>
            <person name="Hall R."/>
            <person name="Garner P."/>
            <person name="Kelly D."/>
            <person name="Bird C."/>
            <person name="Palmer S."/>
            <person name="Gehring I."/>
            <person name="Berger A."/>
            <person name="Dooley C.M."/>
            <person name="Ersan-Urun Z."/>
            <person name="Eser C."/>
            <person name="Geiger H."/>
            <person name="Geisler M."/>
            <person name="Karotki L."/>
            <person name="Kirn A."/>
            <person name="Konantz J."/>
            <person name="Konantz M."/>
            <person name="Oberlander M."/>
            <person name="Rudolph-Geiger S."/>
            <person name="Teucke M."/>
            <person name="Lanz C."/>
            <person name="Raddatz G."/>
            <person name="Osoegawa K."/>
            <person name="Zhu B."/>
            <person name="Rapp A."/>
            <person name="Widaa S."/>
            <person name="Langford C."/>
            <person name="Yang F."/>
            <person name="Schuster S.C."/>
            <person name="Carter N.P."/>
            <person name="Harrow J."/>
            <person name="Ning Z."/>
            <person name="Herrero J."/>
            <person name="Searle S.M."/>
            <person name="Enright A."/>
            <person name="Geisler R."/>
            <person name="Plasterk R.H."/>
            <person name="Lee C."/>
            <person name="Westerfield M."/>
            <person name="de Jong P.J."/>
            <person name="Zon L.I."/>
            <person name="Postlethwait J.H."/>
            <person name="Nusslein-Volhard C."/>
            <person name="Hubbard T.J."/>
            <person name="Roest Crollius H."/>
            <person name="Rogers J."/>
            <person name="Stemple D.L."/>
        </authorList>
    </citation>
    <scope>NUCLEOTIDE SEQUENCE [LARGE SCALE GENOMIC DNA]</scope>
    <source>
        <strain>Tuebingen</strain>
    </source>
</reference>
<reference key="2">
    <citation type="submission" date="2007-12" db="EMBL/GenBank/DDBJ databases">
        <authorList>
            <consortium name="NIH - Zebrafish Gene Collection (ZGC) project"/>
        </authorList>
    </citation>
    <scope>NUCLEOTIDE SEQUENCE [LARGE SCALE MRNA]</scope>
    <source>
        <tissue>Embryo</tissue>
    </source>
</reference>
<protein>
    <recommendedName>
        <fullName evidence="2">Inhibitory synaptic factor 1</fullName>
        <shortName evidence="2">InSyn1</shortName>
    </recommendedName>
</protein>
<feature type="chain" id="PRO_0000337048" description="Inhibitory synaptic factor 1">
    <location>
        <begin position="1"/>
        <end position="287"/>
    </location>
</feature>
<feature type="region of interest" description="Disordered" evidence="4">
    <location>
        <begin position="1"/>
        <end position="22"/>
    </location>
</feature>
<feature type="region of interest" description="Disordered" evidence="4">
    <location>
        <begin position="113"/>
        <end position="174"/>
    </location>
</feature>
<feature type="region of interest" description="Disordered" evidence="4">
    <location>
        <begin position="189"/>
        <end position="287"/>
    </location>
</feature>
<feature type="coiled-coil region" evidence="3">
    <location>
        <begin position="25"/>
        <end position="58"/>
    </location>
</feature>
<feature type="compositionally biased region" description="Low complexity" evidence="4">
    <location>
        <begin position="153"/>
        <end position="167"/>
    </location>
</feature>
<feature type="compositionally biased region" description="Acidic residues" evidence="4">
    <location>
        <begin position="189"/>
        <end position="209"/>
    </location>
</feature>
<feature type="compositionally biased region" description="Polar residues" evidence="4">
    <location>
        <begin position="259"/>
        <end position="274"/>
    </location>
</feature>
<name>INSY1_DANRE</name>
<proteinExistence type="evidence at transcript level"/>